<feature type="chain" id="PRO_1000073815" description="Argininosuccinate synthase">
    <location>
        <begin position="1"/>
        <end position="407"/>
    </location>
</feature>
<feature type="binding site" evidence="1">
    <location>
        <begin position="12"/>
        <end position="20"/>
    </location>
    <ligand>
        <name>ATP</name>
        <dbReference type="ChEBI" id="CHEBI:30616"/>
    </ligand>
</feature>
<feature type="binding site" evidence="1">
    <location>
        <position position="39"/>
    </location>
    <ligand>
        <name>ATP</name>
        <dbReference type="ChEBI" id="CHEBI:30616"/>
    </ligand>
</feature>
<feature type="binding site" evidence="1">
    <location>
        <position position="92"/>
    </location>
    <ligand>
        <name>L-citrulline</name>
        <dbReference type="ChEBI" id="CHEBI:57743"/>
    </ligand>
</feature>
<feature type="binding site" evidence="1">
    <location>
        <position position="97"/>
    </location>
    <ligand>
        <name>L-citrulline</name>
        <dbReference type="ChEBI" id="CHEBI:57743"/>
    </ligand>
</feature>
<feature type="binding site" evidence="1">
    <location>
        <position position="122"/>
    </location>
    <ligand>
        <name>ATP</name>
        <dbReference type="ChEBI" id="CHEBI:30616"/>
    </ligand>
</feature>
<feature type="binding site" evidence="1">
    <location>
        <position position="124"/>
    </location>
    <ligand>
        <name>L-aspartate</name>
        <dbReference type="ChEBI" id="CHEBI:29991"/>
    </ligand>
</feature>
<feature type="binding site" evidence="1">
    <location>
        <position position="128"/>
    </location>
    <ligand>
        <name>L-aspartate</name>
        <dbReference type="ChEBI" id="CHEBI:29991"/>
    </ligand>
</feature>
<feature type="binding site" evidence="1">
    <location>
        <position position="128"/>
    </location>
    <ligand>
        <name>L-citrulline</name>
        <dbReference type="ChEBI" id="CHEBI:57743"/>
    </ligand>
</feature>
<feature type="binding site" evidence="1">
    <location>
        <position position="129"/>
    </location>
    <ligand>
        <name>L-aspartate</name>
        <dbReference type="ChEBI" id="CHEBI:29991"/>
    </ligand>
</feature>
<feature type="binding site" evidence="1">
    <location>
        <position position="132"/>
    </location>
    <ligand>
        <name>L-citrulline</name>
        <dbReference type="ChEBI" id="CHEBI:57743"/>
    </ligand>
</feature>
<feature type="binding site" evidence="1">
    <location>
        <position position="183"/>
    </location>
    <ligand>
        <name>L-citrulline</name>
        <dbReference type="ChEBI" id="CHEBI:57743"/>
    </ligand>
</feature>
<feature type="binding site" evidence="1">
    <location>
        <position position="192"/>
    </location>
    <ligand>
        <name>L-citrulline</name>
        <dbReference type="ChEBI" id="CHEBI:57743"/>
    </ligand>
</feature>
<feature type="binding site" evidence="1">
    <location>
        <position position="268"/>
    </location>
    <ligand>
        <name>L-citrulline</name>
        <dbReference type="ChEBI" id="CHEBI:57743"/>
    </ligand>
</feature>
<feature type="binding site" evidence="1">
    <location>
        <position position="280"/>
    </location>
    <ligand>
        <name>L-citrulline</name>
        <dbReference type="ChEBI" id="CHEBI:57743"/>
    </ligand>
</feature>
<comment type="catalytic activity">
    <reaction evidence="1">
        <text>L-citrulline + L-aspartate + ATP = 2-(N(omega)-L-arginino)succinate + AMP + diphosphate + H(+)</text>
        <dbReference type="Rhea" id="RHEA:10932"/>
        <dbReference type="ChEBI" id="CHEBI:15378"/>
        <dbReference type="ChEBI" id="CHEBI:29991"/>
        <dbReference type="ChEBI" id="CHEBI:30616"/>
        <dbReference type="ChEBI" id="CHEBI:33019"/>
        <dbReference type="ChEBI" id="CHEBI:57472"/>
        <dbReference type="ChEBI" id="CHEBI:57743"/>
        <dbReference type="ChEBI" id="CHEBI:456215"/>
        <dbReference type="EC" id="6.3.4.5"/>
    </reaction>
</comment>
<comment type="pathway">
    <text evidence="1">Amino-acid biosynthesis; L-arginine biosynthesis; L-arginine from L-ornithine and carbamoyl phosphate: step 2/3.</text>
</comment>
<comment type="subunit">
    <text evidence="1">Homotetramer.</text>
</comment>
<comment type="subcellular location">
    <subcellularLocation>
        <location evidence="1">Cytoplasm</location>
    </subcellularLocation>
</comment>
<comment type="similarity">
    <text evidence="1">Belongs to the argininosuccinate synthase family. Type 1 subfamily.</text>
</comment>
<evidence type="ECO:0000255" key="1">
    <source>
        <dbReference type="HAMAP-Rule" id="MF_00005"/>
    </source>
</evidence>
<protein>
    <recommendedName>
        <fullName evidence="1">Argininosuccinate synthase</fullName>
        <ecNumber evidence="1">6.3.4.5</ecNumber>
    </recommendedName>
    <alternativeName>
        <fullName evidence="1">Citrulline--aspartate ligase</fullName>
    </alternativeName>
</protein>
<accession>B0T3Z9</accession>
<name>ASSY_CAUSK</name>
<reference key="1">
    <citation type="submission" date="2008-01" db="EMBL/GenBank/DDBJ databases">
        <title>Complete sequence of chromosome of Caulobacter sp. K31.</title>
        <authorList>
            <consortium name="US DOE Joint Genome Institute"/>
            <person name="Copeland A."/>
            <person name="Lucas S."/>
            <person name="Lapidus A."/>
            <person name="Barry K."/>
            <person name="Glavina del Rio T."/>
            <person name="Dalin E."/>
            <person name="Tice H."/>
            <person name="Pitluck S."/>
            <person name="Bruce D."/>
            <person name="Goodwin L."/>
            <person name="Thompson L.S."/>
            <person name="Brettin T."/>
            <person name="Detter J.C."/>
            <person name="Han C."/>
            <person name="Schmutz J."/>
            <person name="Larimer F."/>
            <person name="Land M."/>
            <person name="Hauser L."/>
            <person name="Kyrpides N."/>
            <person name="Kim E."/>
            <person name="Stephens C."/>
            <person name="Richardson P."/>
        </authorList>
    </citation>
    <scope>NUCLEOTIDE SEQUENCE [LARGE SCALE GENOMIC DNA]</scope>
    <source>
        <strain>K31</strain>
    </source>
</reference>
<proteinExistence type="inferred from homology"/>
<organism>
    <name type="scientific">Caulobacter sp. (strain K31)</name>
    <dbReference type="NCBI Taxonomy" id="366602"/>
    <lineage>
        <taxon>Bacteria</taxon>
        <taxon>Pseudomonadati</taxon>
        <taxon>Pseudomonadota</taxon>
        <taxon>Alphaproteobacteria</taxon>
        <taxon>Caulobacterales</taxon>
        <taxon>Caulobacteraceae</taxon>
        <taxon>Caulobacter</taxon>
    </lineage>
</organism>
<sequence>MANKPVKKVVLAYSGGLDTSIILKWLQTEYGAEVVTFTADLGQGEEIEPARAKALAAGVKPENIFIEDVREEFVRDYVFPMFRANTVYEGQYLLGTSIARPLIAKKQIEIARKVGADAVSHGATGKGNDQVRFELGYYALEPDIHVIAPWREWDFKSREALLDFAEKHQIQIAKDKRGEAPFSVDANLLHSSSEGKVLEDPAVEAPEFVHMRTIAPEDAPDKPHIFTLDFERGDAVAIDGVAMSPATILTKLNELGHDNGVGRLDLVENRFVGMKSRGVYETPGGTILLAAHRGIESITLDRGSMHLKDELMPKYASLVYNGFWFSPEREMLQAAIDYSQAKVAGQVRVKLYKGNVSIIGRTSPYSLYDQDLVTFEEGKVAYDHRDAGGFIKLNALRLRVLAKRDKR</sequence>
<keyword id="KW-0028">Amino-acid biosynthesis</keyword>
<keyword id="KW-0055">Arginine biosynthesis</keyword>
<keyword id="KW-0067">ATP-binding</keyword>
<keyword id="KW-0963">Cytoplasm</keyword>
<keyword id="KW-0436">Ligase</keyword>
<keyword id="KW-0547">Nucleotide-binding</keyword>
<gene>
    <name evidence="1" type="primary">argG</name>
    <name type="ordered locus">Caul_4763</name>
</gene>
<dbReference type="EC" id="6.3.4.5" evidence="1"/>
<dbReference type="EMBL" id="CP000927">
    <property type="protein sequence ID" value="ABZ73883.1"/>
    <property type="molecule type" value="Genomic_DNA"/>
</dbReference>
<dbReference type="SMR" id="B0T3Z9"/>
<dbReference type="STRING" id="366602.Caul_4763"/>
<dbReference type="KEGG" id="cak:Caul_4763"/>
<dbReference type="eggNOG" id="COG0137">
    <property type="taxonomic scope" value="Bacteria"/>
</dbReference>
<dbReference type="HOGENOM" id="CLU_032784_4_2_5"/>
<dbReference type="OrthoDB" id="9801641at2"/>
<dbReference type="UniPathway" id="UPA00068">
    <property type="reaction ID" value="UER00113"/>
</dbReference>
<dbReference type="GO" id="GO:0005737">
    <property type="term" value="C:cytoplasm"/>
    <property type="evidence" value="ECO:0007669"/>
    <property type="project" value="UniProtKB-SubCell"/>
</dbReference>
<dbReference type="GO" id="GO:0004055">
    <property type="term" value="F:argininosuccinate synthase activity"/>
    <property type="evidence" value="ECO:0007669"/>
    <property type="project" value="UniProtKB-UniRule"/>
</dbReference>
<dbReference type="GO" id="GO:0005524">
    <property type="term" value="F:ATP binding"/>
    <property type="evidence" value="ECO:0007669"/>
    <property type="project" value="UniProtKB-UniRule"/>
</dbReference>
<dbReference type="GO" id="GO:0000053">
    <property type="term" value="P:argininosuccinate metabolic process"/>
    <property type="evidence" value="ECO:0007669"/>
    <property type="project" value="TreeGrafter"/>
</dbReference>
<dbReference type="GO" id="GO:0006526">
    <property type="term" value="P:L-arginine biosynthetic process"/>
    <property type="evidence" value="ECO:0007669"/>
    <property type="project" value="UniProtKB-UniRule"/>
</dbReference>
<dbReference type="GO" id="GO:0000050">
    <property type="term" value="P:urea cycle"/>
    <property type="evidence" value="ECO:0007669"/>
    <property type="project" value="TreeGrafter"/>
</dbReference>
<dbReference type="CDD" id="cd01999">
    <property type="entry name" value="ASS"/>
    <property type="match status" value="1"/>
</dbReference>
<dbReference type="FunFam" id="3.40.50.620:FF:000019">
    <property type="entry name" value="Argininosuccinate synthase"/>
    <property type="match status" value="1"/>
</dbReference>
<dbReference type="FunFam" id="3.90.1260.10:FF:000007">
    <property type="entry name" value="Argininosuccinate synthase"/>
    <property type="match status" value="1"/>
</dbReference>
<dbReference type="Gene3D" id="3.90.1260.10">
    <property type="entry name" value="Argininosuccinate synthetase, chain A, domain 2"/>
    <property type="match status" value="1"/>
</dbReference>
<dbReference type="Gene3D" id="3.40.50.620">
    <property type="entry name" value="HUPs"/>
    <property type="match status" value="1"/>
</dbReference>
<dbReference type="Gene3D" id="1.20.5.470">
    <property type="entry name" value="Single helix bin"/>
    <property type="match status" value="1"/>
</dbReference>
<dbReference type="HAMAP" id="MF_00005">
    <property type="entry name" value="Arg_succ_synth_type1"/>
    <property type="match status" value="1"/>
</dbReference>
<dbReference type="InterPro" id="IPR048268">
    <property type="entry name" value="Arginosuc_syn_C"/>
</dbReference>
<dbReference type="InterPro" id="IPR048267">
    <property type="entry name" value="Arginosuc_syn_N"/>
</dbReference>
<dbReference type="InterPro" id="IPR001518">
    <property type="entry name" value="Arginosuc_synth"/>
</dbReference>
<dbReference type="InterPro" id="IPR018223">
    <property type="entry name" value="Arginosuc_synth_CS"/>
</dbReference>
<dbReference type="InterPro" id="IPR023434">
    <property type="entry name" value="Arginosuc_synth_type_1_subfam"/>
</dbReference>
<dbReference type="InterPro" id="IPR024074">
    <property type="entry name" value="AS_cat/multimer_dom_body"/>
</dbReference>
<dbReference type="InterPro" id="IPR014729">
    <property type="entry name" value="Rossmann-like_a/b/a_fold"/>
</dbReference>
<dbReference type="NCBIfam" id="TIGR00032">
    <property type="entry name" value="argG"/>
    <property type="match status" value="1"/>
</dbReference>
<dbReference type="NCBIfam" id="NF001770">
    <property type="entry name" value="PRK00509.1"/>
    <property type="match status" value="1"/>
</dbReference>
<dbReference type="PANTHER" id="PTHR11587">
    <property type="entry name" value="ARGININOSUCCINATE SYNTHASE"/>
    <property type="match status" value="1"/>
</dbReference>
<dbReference type="PANTHER" id="PTHR11587:SF2">
    <property type="entry name" value="ARGININOSUCCINATE SYNTHASE"/>
    <property type="match status" value="1"/>
</dbReference>
<dbReference type="Pfam" id="PF20979">
    <property type="entry name" value="Arginosuc_syn_C"/>
    <property type="match status" value="1"/>
</dbReference>
<dbReference type="Pfam" id="PF00764">
    <property type="entry name" value="Arginosuc_synth"/>
    <property type="match status" value="1"/>
</dbReference>
<dbReference type="SUPFAM" id="SSF52402">
    <property type="entry name" value="Adenine nucleotide alpha hydrolases-like"/>
    <property type="match status" value="1"/>
</dbReference>
<dbReference type="SUPFAM" id="SSF69864">
    <property type="entry name" value="Argininosuccinate synthetase, C-terminal domain"/>
    <property type="match status" value="1"/>
</dbReference>
<dbReference type="PROSITE" id="PS00564">
    <property type="entry name" value="ARGININOSUCCIN_SYN_1"/>
    <property type="match status" value="1"/>
</dbReference>
<dbReference type="PROSITE" id="PS00565">
    <property type="entry name" value="ARGININOSUCCIN_SYN_2"/>
    <property type="match status" value="1"/>
</dbReference>